<reference key="1">
    <citation type="submission" date="2007-10" db="EMBL/GenBank/DDBJ databases">
        <title>Complete sequence of chromosome 1 of Burkholderia multivorans ATCC 17616.</title>
        <authorList>
            <person name="Copeland A."/>
            <person name="Lucas S."/>
            <person name="Lapidus A."/>
            <person name="Barry K."/>
            <person name="Glavina del Rio T."/>
            <person name="Dalin E."/>
            <person name="Tice H."/>
            <person name="Pitluck S."/>
            <person name="Chain P."/>
            <person name="Malfatti S."/>
            <person name="Shin M."/>
            <person name="Vergez L."/>
            <person name="Schmutz J."/>
            <person name="Larimer F."/>
            <person name="Land M."/>
            <person name="Hauser L."/>
            <person name="Kyrpides N."/>
            <person name="Kim E."/>
            <person name="Tiedje J."/>
            <person name="Richardson P."/>
        </authorList>
    </citation>
    <scope>NUCLEOTIDE SEQUENCE [LARGE SCALE GENOMIC DNA]</scope>
    <source>
        <strain>ATCC 17616 / 249</strain>
    </source>
</reference>
<reference key="2">
    <citation type="submission" date="2007-04" db="EMBL/GenBank/DDBJ databases">
        <title>Complete genome sequence of Burkholderia multivorans ATCC 17616.</title>
        <authorList>
            <person name="Ohtsubo Y."/>
            <person name="Yamashita A."/>
            <person name="Kurokawa K."/>
            <person name="Takami H."/>
            <person name="Yuhara S."/>
            <person name="Nishiyama E."/>
            <person name="Endo R."/>
            <person name="Miyazaki R."/>
            <person name="Ono A."/>
            <person name="Yano K."/>
            <person name="Ito M."/>
            <person name="Sota M."/>
            <person name="Yuji N."/>
            <person name="Hattori M."/>
            <person name="Tsuda M."/>
        </authorList>
    </citation>
    <scope>NUCLEOTIDE SEQUENCE [LARGE SCALE GENOMIC DNA]</scope>
    <source>
        <strain>ATCC 17616 / 249</strain>
    </source>
</reference>
<sequence length="448" mass="49750">MANVVENLGKLERRVTISLPKETVQKEIDARIQKLAKNVRMPGFRPGKVPLKMVAQQYAGQVEAEVLSDKIGQEFFTISRAENLRVAGQPSFAPKQEQSDDAYAFDATFEVYPEVKIGDLSTAEVERSTTTIGDAEIDRTLDILRKQRVHFHARGEAGEHGDGGADTAAQNGDRVTVDFVGKIDDVAFPGGTAEDFPFVLGEGRMLPEFEQAALGLKAGESRTFELKFPDDYHGKDVAGKTAQFTVTMKKVEWPHLPEIDAEFAKSLGIEDGDLAKMRNEIKENLEREAKRRTQAIVKNQVMDALLKISELDVPKALIEQDQQRLVEMARQDLAQRGVPNAKDAPIPAEMFAEQAERRVKLGLVLAELVKANGLEAKPEQIRAEVDEFAKSYEDPKEVVRWYYSNQQRLAEMEAFVVESNVVDFVLGKAKVTDKEVSFEALASASAQA</sequence>
<gene>
    <name evidence="1" type="primary">tig</name>
    <name type="ordered locus">Bmul_1348</name>
    <name type="ordered locus">BMULJ_01897</name>
</gene>
<keyword id="KW-0131">Cell cycle</keyword>
<keyword id="KW-0132">Cell division</keyword>
<keyword id="KW-0143">Chaperone</keyword>
<keyword id="KW-0963">Cytoplasm</keyword>
<keyword id="KW-0413">Isomerase</keyword>
<keyword id="KW-1185">Reference proteome</keyword>
<keyword id="KW-0697">Rotamase</keyword>
<organism>
    <name type="scientific">Burkholderia multivorans (strain ATCC 17616 / 249)</name>
    <dbReference type="NCBI Taxonomy" id="395019"/>
    <lineage>
        <taxon>Bacteria</taxon>
        <taxon>Pseudomonadati</taxon>
        <taxon>Pseudomonadota</taxon>
        <taxon>Betaproteobacteria</taxon>
        <taxon>Burkholderiales</taxon>
        <taxon>Burkholderiaceae</taxon>
        <taxon>Burkholderia</taxon>
        <taxon>Burkholderia cepacia complex</taxon>
    </lineage>
</organism>
<comment type="function">
    <text evidence="1">Involved in protein export. Acts as a chaperone by maintaining the newly synthesized protein in an open conformation. Functions as a peptidyl-prolyl cis-trans isomerase.</text>
</comment>
<comment type="catalytic activity">
    <reaction evidence="1">
        <text>[protein]-peptidylproline (omega=180) = [protein]-peptidylproline (omega=0)</text>
        <dbReference type="Rhea" id="RHEA:16237"/>
        <dbReference type="Rhea" id="RHEA-COMP:10747"/>
        <dbReference type="Rhea" id="RHEA-COMP:10748"/>
        <dbReference type="ChEBI" id="CHEBI:83833"/>
        <dbReference type="ChEBI" id="CHEBI:83834"/>
        <dbReference type="EC" id="5.2.1.8"/>
    </reaction>
</comment>
<comment type="subcellular location">
    <subcellularLocation>
        <location>Cytoplasm</location>
    </subcellularLocation>
    <text evidence="1">About half TF is bound to the ribosome near the polypeptide exit tunnel while the other half is free in the cytoplasm.</text>
</comment>
<comment type="domain">
    <text evidence="1">Consists of 3 domains; the N-terminus binds the ribosome, the middle domain has PPIase activity, while the C-terminus has intrinsic chaperone activity on its own.</text>
</comment>
<comment type="similarity">
    <text evidence="1">Belongs to the FKBP-type PPIase family. Tig subfamily.</text>
</comment>
<dbReference type="EC" id="5.2.1.8" evidence="1"/>
<dbReference type="EMBL" id="CP000868">
    <property type="protein sequence ID" value="ABX15036.1"/>
    <property type="molecule type" value="Genomic_DNA"/>
</dbReference>
<dbReference type="EMBL" id="AP009385">
    <property type="protein sequence ID" value="BAG43815.1"/>
    <property type="molecule type" value="Genomic_DNA"/>
</dbReference>
<dbReference type="RefSeq" id="WP_006402236.1">
    <property type="nucleotide sequence ID" value="NC_010804.1"/>
</dbReference>
<dbReference type="SMR" id="A9AJQ9"/>
<dbReference type="STRING" id="395019.BMULJ_01897"/>
<dbReference type="KEGG" id="bmj:BMULJ_01897"/>
<dbReference type="KEGG" id="bmu:Bmul_1348"/>
<dbReference type="eggNOG" id="COG0544">
    <property type="taxonomic scope" value="Bacteria"/>
</dbReference>
<dbReference type="HOGENOM" id="CLU_033058_2_0_4"/>
<dbReference type="Proteomes" id="UP000008815">
    <property type="component" value="Chromosome 1"/>
</dbReference>
<dbReference type="GO" id="GO:0005737">
    <property type="term" value="C:cytoplasm"/>
    <property type="evidence" value="ECO:0007669"/>
    <property type="project" value="UniProtKB-SubCell"/>
</dbReference>
<dbReference type="GO" id="GO:0003755">
    <property type="term" value="F:peptidyl-prolyl cis-trans isomerase activity"/>
    <property type="evidence" value="ECO:0007669"/>
    <property type="project" value="UniProtKB-UniRule"/>
</dbReference>
<dbReference type="GO" id="GO:0044183">
    <property type="term" value="F:protein folding chaperone"/>
    <property type="evidence" value="ECO:0007669"/>
    <property type="project" value="TreeGrafter"/>
</dbReference>
<dbReference type="GO" id="GO:0043022">
    <property type="term" value="F:ribosome binding"/>
    <property type="evidence" value="ECO:0007669"/>
    <property type="project" value="TreeGrafter"/>
</dbReference>
<dbReference type="GO" id="GO:0051083">
    <property type="term" value="P:'de novo' cotranslational protein folding"/>
    <property type="evidence" value="ECO:0007669"/>
    <property type="project" value="TreeGrafter"/>
</dbReference>
<dbReference type="GO" id="GO:0051301">
    <property type="term" value="P:cell division"/>
    <property type="evidence" value="ECO:0007669"/>
    <property type="project" value="UniProtKB-KW"/>
</dbReference>
<dbReference type="GO" id="GO:0061077">
    <property type="term" value="P:chaperone-mediated protein folding"/>
    <property type="evidence" value="ECO:0007669"/>
    <property type="project" value="TreeGrafter"/>
</dbReference>
<dbReference type="GO" id="GO:0015031">
    <property type="term" value="P:protein transport"/>
    <property type="evidence" value="ECO:0007669"/>
    <property type="project" value="UniProtKB-UniRule"/>
</dbReference>
<dbReference type="GO" id="GO:0043335">
    <property type="term" value="P:protein unfolding"/>
    <property type="evidence" value="ECO:0007669"/>
    <property type="project" value="TreeGrafter"/>
</dbReference>
<dbReference type="FunFam" id="3.10.50.40:FF:000001">
    <property type="entry name" value="Trigger factor"/>
    <property type="match status" value="1"/>
</dbReference>
<dbReference type="Gene3D" id="3.10.50.40">
    <property type="match status" value="1"/>
</dbReference>
<dbReference type="Gene3D" id="3.30.70.1050">
    <property type="entry name" value="Trigger factor ribosome-binding domain"/>
    <property type="match status" value="1"/>
</dbReference>
<dbReference type="Gene3D" id="1.10.3120.10">
    <property type="entry name" value="Trigger factor, C-terminal domain"/>
    <property type="match status" value="1"/>
</dbReference>
<dbReference type="HAMAP" id="MF_00303">
    <property type="entry name" value="Trigger_factor_Tig"/>
    <property type="match status" value="1"/>
</dbReference>
<dbReference type="InterPro" id="IPR046357">
    <property type="entry name" value="PPIase_dom_sf"/>
</dbReference>
<dbReference type="InterPro" id="IPR001179">
    <property type="entry name" value="PPIase_FKBP_dom"/>
</dbReference>
<dbReference type="InterPro" id="IPR005215">
    <property type="entry name" value="Trig_fac"/>
</dbReference>
<dbReference type="InterPro" id="IPR008880">
    <property type="entry name" value="Trigger_fac_C"/>
</dbReference>
<dbReference type="InterPro" id="IPR037041">
    <property type="entry name" value="Trigger_fac_C_sf"/>
</dbReference>
<dbReference type="InterPro" id="IPR008881">
    <property type="entry name" value="Trigger_fac_ribosome-bd_bac"/>
</dbReference>
<dbReference type="InterPro" id="IPR036611">
    <property type="entry name" value="Trigger_fac_ribosome-bd_sf"/>
</dbReference>
<dbReference type="InterPro" id="IPR027304">
    <property type="entry name" value="Trigger_fact/SurA_dom_sf"/>
</dbReference>
<dbReference type="NCBIfam" id="TIGR00115">
    <property type="entry name" value="tig"/>
    <property type="match status" value="1"/>
</dbReference>
<dbReference type="PANTHER" id="PTHR30560">
    <property type="entry name" value="TRIGGER FACTOR CHAPERONE AND PEPTIDYL-PROLYL CIS/TRANS ISOMERASE"/>
    <property type="match status" value="1"/>
</dbReference>
<dbReference type="PANTHER" id="PTHR30560:SF3">
    <property type="entry name" value="TRIGGER FACTOR-LIKE PROTEIN TIG, CHLOROPLASTIC"/>
    <property type="match status" value="1"/>
</dbReference>
<dbReference type="Pfam" id="PF00254">
    <property type="entry name" value="FKBP_C"/>
    <property type="match status" value="1"/>
</dbReference>
<dbReference type="Pfam" id="PF05698">
    <property type="entry name" value="Trigger_C"/>
    <property type="match status" value="1"/>
</dbReference>
<dbReference type="Pfam" id="PF05697">
    <property type="entry name" value="Trigger_N"/>
    <property type="match status" value="1"/>
</dbReference>
<dbReference type="PIRSF" id="PIRSF003095">
    <property type="entry name" value="Trigger_factor"/>
    <property type="match status" value="1"/>
</dbReference>
<dbReference type="SUPFAM" id="SSF54534">
    <property type="entry name" value="FKBP-like"/>
    <property type="match status" value="1"/>
</dbReference>
<dbReference type="SUPFAM" id="SSF109998">
    <property type="entry name" value="Triger factor/SurA peptide-binding domain-like"/>
    <property type="match status" value="1"/>
</dbReference>
<dbReference type="SUPFAM" id="SSF102735">
    <property type="entry name" value="Trigger factor ribosome-binding domain"/>
    <property type="match status" value="1"/>
</dbReference>
<dbReference type="PROSITE" id="PS50059">
    <property type="entry name" value="FKBP_PPIASE"/>
    <property type="match status" value="1"/>
</dbReference>
<name>TIG_BURM1</name>
<proteinExistence type="inferred from homology"/>
<protein>
    <recommendedName>
        <fullName evidence="1">Trigger factor</fullName>
        <shortName evidence="1">TF</shortName>
        <ecNumber evidence="1">5.2.1.8</ecNumber>
    </recommendedName>
    <alternativeName>
        <fullName evidence="1">PPIase</fullName>
    </alternativeName>
</protein>
<accession>A9AJQ9</accession>
<feature type="chain" id="PRO_1000115510" description="Trigger factor">
    <location>
        <begin position="1"/>
        <end position="448"/>
    </location>
</feature>
<feature type="domain" description="PPIase FKBP-type" evidence="1">
    <location>
        <begin position="172"/>
        <end position="257"/>
    </location>
</feature>
<evidence type="ECO:0000255" key="1">
    <source>
        <dbReference type="HAMAP-Rule" id="MF_00303"/>
    </source>
</evidence>